<organismHost>
    <name type="scientific">Elephas maximus</name>
    <name type="common">Indian elephant</name>
    <dbReference type="NCBI Taxonomy" id="9783"/>
</organismHost>
<organismHost>
    <name type="scientific">Loxodonta africana</name>
    <name type="common">African elephant</name>
    <dbReference type="NCBI Taxonomy" id="9785"/>
</organismHost>
<organismHost>
    <name type="scientific">Loxodonta cyclotis</name>
    <name type="common">African forest elephant</name>
    <dbReference type="NCBI Taxonomy" id="99490"/>
</organismHost>
<dbReference type="EMBL" id="AF322977">
    <property type="protein sequence ID" value="ABG36572.1"/>
    <property type="molecule type" value="Genomic_DNA"/>
</dbReference>
<dbReference type="GO" id="GO:0044177">
    <property type="term" value="C:host cell Golgi apparatus"/>
    <property type="evidence" value="ECO:0007669"/>
    <property type="project" value="UniProtKB-SubCell"/>
</dbReference>
<dbReference type="GO" id="GO:0044196">
    <property type="term" value="C:host cell nucleolus"/>
    <property type="evidence" value="ECO:0007669"/>
    <property type="project" value="UniProtKB-SubCell"/>
</dbReference>
<dbReference type="GO" id="GO:0044423">
    <property type="term" value="C:virion component"/>
    <property type="evidence" value="ECO:0007669"/>
    <property type="project" value="UniProtKB-KW"/>
</dbReference>
<dbReference type="InterPro" id="IPR002580">
    <property type="entry name" value="Herpes_UL24"/>
</dbReference>
<dbReference type="Pfam" id="PF01646">
    <property type="entry name" value="Herpes_UL24"/>
    <property type="match status" value="1"/>
</dbReference>
<name>UL24_ELHVK</name>
<feature type="chain" id="PRO_0000408165" description="Protein UL24 homolog">
    <location>
        <begin position="1"/>
        <end position="232"/>
    </location>
</feature>
<feature type="region of interest" description="Disordered" evidence="2">
    <location>
        <begin position="191"/>
        <end position="232"/>
    </location>
</feature>
<protein>
    <recommendedName>
        <fullName>Protein UL24 homolog</fullName>
    </recommendedName>
</protein>
<reference key="1">
    <citation type="journal article" date="2007" name="J. Virol.">
        <title>Identification of novel rodent herpesviruses, including the first gammaherpesvirus of Mus musculus.</title>
        <authorList>
            <person name="Ehlers B."/>
            <person name="Kuchler J."/>
            <person name="Yasmum N."/>
            <person name="Dural G."/>
            <person name="Voigt S."/>
            <person name="Schmidt-Chanasit J."/>
            <person name="Jakel T."/>
            <person name="Matuschka F.R."/>
            <person name="Richter D."/>
            <person name="Essbauer S."/>
            <person name="Hughes D.J."/>
            <person name="Summers C."/>
            <person name="Bennett M."/>
            <person name="Stewart J.P."/>
            <person name="Ulrich R.G."/>
        </authorList>
    </citation>
    <scope>NUCLEOTIDE SEQUENCE [GENOMIC DNA]</scope>
</reference>
<reference key="2">
    <citation type="journal article" date="2001" name="J. Gen. Virol.">
        <title>Genetic and ultrastructural characterization of a European isolate of the fatal endotheliotropic elephant herpesvirus.</title>
        <authorList>
            <person name="Ehlers B."/>
            <person name="Burkhardt S."/>
            <person name="Goltz M."/>
            <person name="Bergmann V."/>
            <person name="Ochs A."/>
            <person name="Weiler H."/>
            <person name="Hentschke J."/>
        </authorList>
    </citation>
    <scope>NUCLEOTIDE SEQUENCE [GENOMIC DNA]</scope>
</reference>
<accession>Q18LE7</accession>
<comment type="function">
    <text evidence="1">May participate in nuclear egress of viral particles. Plays a role in the dispersal of several host nucleolar proteins including NCL/nucleolin and NPM1. Since deletion of host NCL/nucleolin negatively impact on nuclear egress, UL24 supposedly acts on this process through its effect on host nucleoli (By similarity).</text>
</comment>
<comment type="subcellular location">
    <subcellularLocation>
        <location evidence="1">Virion</location>
    </subcellularLocation>
    <subcellularLocation>
        <location evidence="1">Host cytoplasm</location>
    </subcellularLocation>
    <subcellularLocation>
        <location evidence="1">Host nucleus</location>
        <location evidence="1">Host nucleolus</location>
    </subcellularLocation>
    <subcellularLocation>
        <location evidence="1">Host Golgi apparatus</location>
    </subcellularLocation>
</comment>
<comment type="induction">
    <text>Expressed late in the infection cycle.</text>
</comment>
<comment type="similarity">
    <text evidence="3">Belongs to the herpesviridae UL24 family.</text>
</comment>
<keyword id="KW-1035">Host cytoplasm</keyword>
<keyword id="KW-1040">Host Golgi apparatus</keyword>
<keyword id="KW-1048">Host nucleus</keyword>
<keyword id="KW-0426">Late protein</keyword>
<keyword id="KW-0946">Virion</keyword>
<proteinExistence type="evidence at transcript level"/>
<organism>
    <name type="scientific">Elephantid herpesvirus 1 (isolate Asian elephant/Berlin/Kiba/1998)</name>
    <name type="common">EIHV-1</name>
    <name type="synonym">Elephant endotheliotropic herpesvirus</name>
    <dbReference type="NCBI Taxonomy" id="654902"/>
    <lineage>
        <taxon>Viruses</taxon>
        <taxon>Duplodnaviria</taxon>
        <taxon>Heunggongvirae</taxon>
        <taxon>Peploviricota</taxon>
        <taxon>Herviviricetes</taxon>
        <taxon>Herpesvirales</taxon>
        <taxon>Orthoherpesviridae</taxon>
        <taxon>Betaherpesvirinae</taxon>
        <taxon>Proboscivirus</taxon>
        <taxon>Proboscivirus elephantidbeta1</taxon>
        <taxon>Elephantid herpesvirus 1</taxon>
    </lineage>
</organism>
<sequence length="232" mass="26397">MPVNFVAARKKRDGVNTHIELQKAIYKSRSFTEINNILDGILPDAHRETPFATYFEANLGCRRPDCMIVFDDLPKQIITCVLVEFKTTSRTAFDKRKKDAVQQYQLHQGEEQVRDAVKILSSITGRGCNLRVWGFLLFYQQSTLRVLHKTIPECAVTLTDRWAFSALLKKSKNESFHAFLQKSCTASTTGPQKELFGIHKPENSEVETVGATKSTRKGAEKSRLSRRSRKSN</sequence>
<evidence type="ECO:0000250" key="1"/>
<evidence type="ECO:0000256" key="2">
    <source>
        <dbReference type="SAM" id="MobiDB-lite"/>
    </source>
</evidence>
<evidence type="ECO:0000305" key="3"/>